<organism>
    <name type="scientific">Drosophila yakuba</name>
    <name type="common">Fruit fly</name>
    <dbReference type="NCBI Taxonomy" id="7245"/>
    <lineage>
        <taxon>Eukaryota</taxon>
        <taxon>Metazoa</taxon>
        <taxon>Ecdysozoa</taxon>
        <taxon>Arthropoda</taxon>
        <taxon>Hexapoda</taxon>
        <taxon>Insecta</taxon>
        <taxon>Pterygota</taxon>
        <taxon>Neoptera</taxon>
        <taxon>Endopterygota</taxon>
        <taxon>Diptera</taxon>
        <taxon>Brachycera</taxon>
        <taxon>Muscomorpha</taxon>
        <taxon>Ephydroidea</taxon>
        <taxon>Drosophilidae</taxon>
        <taxon>Drosophila</taxon>
        <taxon>Sophophora</taxon>
    </lineage>
</organism>
<protein>
    <recommendedName>
        <fullName evidence="2">Putative N(4)-(beta-N-acetylglucosaminyl)-L-asparaginase GE19290</fullName>
        <ecNumber>3.5.1.26</ecNumber>
    </recommendedName>
    <alternativeName>
        <fullName evidence="2">Aspartylglucosaminidase</fullName>
        <shortName evidence="2">AGA</shortName>
    </alternativeName>
    <alternativeName>
        <fullName evidence="2">Glycosylasparaginase</fullName>
    </alternativeName>
    <alternativeName>
        <fullName evidence="2">N4-(N-acetyl-beta-glucosaminyl)-L-asparagine amidase</fullName>
    </alternativeName>
    <component>
        <recommendedName>
            <fullName evidence="2">Glycosylasparaginase alpha chain</fullName>
        </recommendedName>
    </component>
    <component>
        <recommendedName>
            <fullName evidence="2">Glycosylasparaginase beta chain</fullName>
        </recommendedName>
    </component>
</protein>
<accession>B4NWI1</accession>
<gene>
    <name type="ORF">GE19290</name>
</gene>
<reference evidence="4" key="1">
    <citation type="journal article" date="2007" name="Nature">
        <title>Evolution of genes and genomes on the Drosophila phylogeny.</title>
        <authorList>
            <consortium name="Drosophila 12 genomes consortium"/>
        </authorList>
    </citation>
    <scope>NUCLEOTIDE SEQUENCE [LARGE SCALE GENOMIC DNA]</scope>
    <source>
        <strain evidence="4">Tai18E2 / Tucson 14021-0261.01</strain>
    </source>
</reference>
<feature type="signal peptide" evidence="3">
    <location>
        <begin position="1"/>
        <end position="23"/>
    </location>
</feature>
<feature type="chain" id="PRO_0000384139" description="Glycosylasparaginase alpha chain" evidence="2">
    <location>
        <begin position="24"/>
        <end position="245"/>
    </location>
</feature>
<feature type="chain" id="PRO_0000384140" description="Glycosylasparaginase beta chain" evidence="2">
    <location>
        <begin position="246"/>
        <end position="396"/>
    </location>
</feature>
<feature type="active site" description="Nucleophile" evidence="2">
    <location>
        <position position="246"/>
    </location>
</feature>
<feature type="binding site" evidence="1">
    <location>
        <begin position="274"/>
        <end position="277"/>
    </location>
    <ligand>
        <name>substrate</name>
    </ligand>
</feature>
<feature type="binding site" evidence="1">
    <location>
        <begin position="297"/>
        <end position="300"/>
    </location>
    <ligand>
        <name>substrate</name>
    </ligand>
</feature>
<feature type="disulfide bond" evidence="2">
    <location>
        <begin position="100"/>
        <end position="105"/>
    </location>
</feature>
<feature type="disulfide bond" evidence="2">
    <location>
        <begin position="199"/>
        <end position="215"/>
    </location>
</feature>
<feature type="disulfide bond" evidence="2">
    <location>
        <begin position="357"/>
        <end position="384"/>
    </location>
</feature>
<dbReference type="EC" id="3.5.1.26"/>
<dbReference type="EMBL" id="CM000157">
    <property type="protein sequence ID" value="EDW89526.1"/>
    <property type="molecule type" value="Genomic_DNA"/>
</dbReference>
<dbReference type="SMR" id="B4NWI1"/>
<dbReference type="EnsemblMetazoa" id="FBtr0265808">
    <property type="protein sequence ID" value="FBpp0264300"/>
    <property type="gene ID" value="FBgn0236640"/>
</dbReference>
<dbReference type="EnsemblMetazoa" id="XM_002089778.4">
    <property type="protein sequence ID" value="XP_002089814.2"/>
    <property type="gene ID" value="LOC6528780"/>
</dbReference>
<dbReference type="GeneID" id="6528780"/>
<dbReference type="KEGG" id="dya:Dyak_GE19290"/>
<dbReference type="eggNOG" id="KOG1593">
    <property type="taxonomic scope" value="Eukaryota"/>
</dbReference>
<dbReference type="HOGENOM" id="CLU_021603_0_0_1"/>
<dbReference type="OMA" id="YKPIINI"/>
<dbReference type="OrthoDB" id="188713at2759"/>
<dbReference type="PhylomeDB" id="B4NWI1"/>
<dbReference type="Proteomes" id="UP000002282">
    <property type="component" value="Chromosome 2L"/>
</dbReference>
<dbReference type="GO" id="GO:0005764">
    <property type="term" value="C:lysosome"/>
    <property type="evidence" value="ECO:0000250"/>
    <property type="project" value="UniProtKB"/>
</dbReference>
<dbReference type="GO" id="GO:0003948">
    <property type="term" value="F:N4-(beta-N-acetylglucosaminyl)-L-asparaginase activity"/>
    <property type="evidence" value="ECO:0000250"/>
    <property type="project" value="UniProtKB"/>
</dbReference>
<dbReference type="GO" id="GO:0008233">
    <property type="term" value="F:peptidase activity"/>
    <property type="evidence" value="ECO:0007669"/>
    <property type="project" value="UniProtKB-KW"/>
</dbReference>
<dbReference type="GO" id="GO:0006517">
    <property type="term" value="P:protein deglycosylation"/>
    <property type="evidence" value="ECO:0000250"/>
    <property type="project" value="UniProtKB"/>
</dbReference>
<dbReference type="GO" id="GO:0006508">
    <property type="term" value="P:proteolysis"/>
    <property type="evidence" value="ECO:0007669"/>
    <property type="project" value="UniProtKB-KW"/>
</dbReference>
<dbReference type="CDD" id="cd04513">
    <property type="entry name" value="Glycosylasparaginase"/>
    <property type="match status" value="1"/>
</dbReference>
<dbReference type="FunFam" id="3.60.20.30:FF:000003">
    <property type="entry name" value="N(4)-(Beta-N-acetylglucosaminyl)-L-asparaginase isoform X1"/>
    <property type="match status" value="1"/>
</dbReference>
<dbReference type="Gene3D" id="3.60.20.30">
    <property type="entry name" value="(Glycosyl)asparaginase"/>
    <property type="match status" value="1"/>
</dbReference>
<dbReference type="InterPro" id="IPR029055">
    <property type="entry name" value="Ntn_hydrolases_N"/>
</dbReference>
<dbReference type="InterPro" id="IPR000246">
    <property type="entry name" value="Peptidase_T2"/>
</dbReference>
<dbReference type="PANTHER" id="PTHR10188">
    <property type="entry name" value="L-ASPARAGINASE"/>
    <property type="match status" value="1"/>
</dbReference>
<dbReference type="PANTHER" id="PTHR10188:SF6">
    <property type="entry name" value="N(4)-(BETA-N-ACETYLGLUCOSAMINYL)-L-ASPARAGINASE"/>
    <property type="match status" value="1"/>
</dbReference>
<dbReference type="Pfam" id="PF01112">
    <property type="entry name" value="Asparaginase_2"/>
    <property type="match status" value="1"/>
</dbReference>
<dbReference type="SUPFAM" id="SSF56235">
    <property type="entry name" value="N-terminal nucleophile aminohydrolases (Ntn hydrolases)"/>
    <property type="match status" value="1"/>
</dbReference>
<proteinExistence type="inferred from homology"/>
<evidence type="ECO:0000250" key="1"/>
<evidence type="ECO:0000250" key="2">
    <source>
        <dbReference type="UniProtKB" id="P20933"/>
    </source>
</evidence>
<evidence type="ECO:0000255" key="3"/>
<evidence type="ECO:0000312" key="4">
    <source>
        <dbReference type="EMBL" id="EDW89526.1"/>
    </source>
</evidence>
<keyword id="KW-0068">Autocatalytic cleavage</keyword>
<keyword id="KW-1015">Disulfide bond</keyword>
<keyword id="KW-0378">Hydrolase</keyword>
<keyword id="KW-0645">Protease</keyword>
<keyword id="KW-0732">Signal</keyword>
<comment type="function">
    <text evidence="2">Cleaves the GlcNAc-Asn bond which joins oligosaccharides to the peptide of asparagine-linked glycoproteins.</text>
</comment>
<comment type="catalytic activity">
    <reaction evidence="2">
        <text>N(4)-(beta-N-acetyl-D-glucosaminyl)-L-asparagine + H2O = N-acetyl-beta-D-glucosaminylamine + L-aspartate + H(+)</text>
        <dbReference type="Rhea" id="RHEA:11544"/>
        <dbReference type="ChEBI" id="CHEBI:15377"/>
        <dbReference type="ChEBI" id="CHEBI:15378"/>
        <dbReference type="ChEBI" id="CHEBI:15947"/>
        <dbReference type="ChEBI" id="CHEBI:29991"/>
        <dbReference type="ChEBI" id="CHEBI:58080"/>
        <dbReference type="EC" id="3.5.1.26"/>
    </reaction>
</comment>
<comment type="subunit">
    <text evidence="2">Heterotetramer of two alpha and two beta chains arranged as a dimer of alpha/beta heterodimers.</text>
</comment>
<comment type="PTM">
    <text evidence="1">Cleaved into an alpha and beta chain by autocatalysis; this activates the enzyme. The N-terminal residue of the beta subunit is responsible for the nucleophile hydrolase activity (By similarity).</text>
</comment>
<comment type="similarity">
    <text evidence="3">Belongs to the Ntn-hydrolase family.</text>
</comment>
<name>ASPG1_DROYA</name>
<sequence>MKRHLKACLWVLCFASTALSSLADTTSPKPTLASAFSGKSKTTAVSTALKANKTASELLPMVINTWNFTAANVLAWRILKQSKGGLRQTRNAVVEGCSKCEKLQCDRTVGYGGSPDELGETTLDAMVMDGATMEVGAVAGLRRIKDAIKVARHVLEHTQHTMLVGDAASAFANAMGFESESLVTPESKDMWLQWTAENCQPNFWKNVHPDPKVSCGPYKPRPTPLTRWKEDRARNEYEIGRKNHDTIGMIAIDVESNIHAGTSTNGARHKIPGRVGDSPIPGAGAYADNEVGAAVATGDGDVMMRFLPSLLAVEAMRAGKPPADAAEESLRRIIRHHKDFMGALIAVDRLGRYGAACYGLDEFPFMVSSPAGRDGPTRLETVKCIAGQDKVNIVSF</sequence>